<reference key="1">
    <citation type="journal article" date="2006" name="Proc. Natl. Acad. Sci. U.S.A.">
        <title>Comparative genomics of the lactic acid bacteria.</title>
        <authorList>
            <person name="Makarova K.S."/>
            <person name="Slesarev A."/>
            <person name="Wolf Y.I."/>
            <person name="Sorokin A."/>
            <person name="Mirkin B."/>
            <person name="Koonin E.V."/>
            <person name="Pavlov A."/>
            <person name="Pavlova N."/>
            <person name="Karamychev V."/>
            <person name="Polouchine N."/>
            <person name="Shakhova V."/>
            <person name="Grigoriev I."/>
            <person name="Lou Y."/>
            <person name="Rohksar D."/>
            <person name="Lucas S."/>
            <person name="Huang K."/>
            <person name="Goodstein D.M."/>
            <person name="Hawkins T."/>
            <person name="Plengvidhya V."/>
            <person name="Welker D."/>
            <person name="Hughes J."/>
            <person name="Goh Y."/>
            <person name="Benson A."/>
            <person name="Baldwin K."/>
            <person name="Lee J.-H."/>
            <person name="Diaz-Muniz I."/>
            <person name="Dosti B."/>
            <person name="Smeianov V."/>
            <person name="Wechter W."/>
            <person name="Barabote R."/>
            <person name="Lorca G."/>
            <person name="Altermann E."/>
            <person name="Barrangou R."/>
            <person name="Ganesan B."/>
            <person name="Xie Y."/>
            <person name="Rawsthorne H."/>
            <person name="Tamir D."/>
            <person name="Parker C."/>
            <person name="Breidt F."/>
            <person name="Broadbent J.R."/>
            <person name="Hutkins R."/>
            <person name="O'Sullivan D."/>
            <person name="Steele J."/>
            <person name="Unlu G."/>
            <person name="Saier M.H. Jr."/>
            <person name="Klaenhammer T."/>
            <person name="Richardson P."/>
            <person name="Kozyavkin S."/>
            <person name="Weimer B.C."/>
            <person name="Mills D.A."/>
        </authorList>
    </citation>
    <scope>NUCLEOTIDE SEQUENCE [LARGE SCALE GENOMIC DNA]</scope>
    <source>
        <strain>SK11</strain>
    </source>
</reference>
<keyword id="KW-0342">GTP-binding</keyword>
<keyword id="KW-0547">Nucleotide-binding</keyword>
<keyword id="KW-0677">Repeat</keyword>
<keyword id="KW-0690">Ribosome biogenesis</keyword>
<sequence length="436" mass="48909">MSLPTVAIVGRPNVGKSTIFNRIAGERISIVEDIPGVTRDRIYATGEWLTRKFNIIDTGGIELSDEPFMTEIRAQAEIAMTEADVIIAVVDGETGITDADEAVANILYRTDKPVILIVNKVDNPERRMEIFDFYSLGLGDPYPVSAVHGIGTGDVLDAIVQNLPNEIEEENEDVIKFSLIGRPNVGKSSLINAILGEDRVIASPIAGTTRDAIDTHFVDSEDQEFVMIDTAGMRKSGKIYENTEKYSVMRAMRAIDRSDIVLMVINAEEGIREYDMRIAGFAHEAGKGILIVVNKWDTLEKDNDTMKKFELEIRTKFKFLDYAPIVYVSAKTGQRLNKLPDMIKEIHHAQNLRISSSVLNDVIMDAVAINPTPTDKGKRLKIFYATQVAIKPPTFVVFVNEEELMHFSYLRFLENQIRKAFVFEGTPIHLIARKRK</sequence>
<evidence type="ECO:0000255" key="1">
    <source>
        <dbReference type="HAMAP-Rule" id="MF_00195"/>
    </source>
</evidence>
<accession>Q030L6</accession>
<comment type="function">
    <text evidence="1">GTPase that plays an essential role in the late steps of ribosome biogenesis.</text>
</comment>
<comment type="subunit">
    <text evidence="1">Associates with the 50S ribosomal subunit.</text>
</comment>
<comment type="similarity">
    <text evidence="1">Belongs to the TRAFAC class TrmE-Era-EngA-EngB-Septin-like GTPase superfamily. EngA (Der) GTPase family.</text>
</comment>
<feature type="chain" id="PRO_1000011650" description="GTPase Der">
    <location>
        <begin position="1"/>
        <end position="436"/>
    </location>
</feature>
<feature type="domain" description="EngA-type G 1">
    <location>
        <begin position="4"/>
        <end position="167"/>
    </location>
</feature>
<feature type="domain" description="EngA-type G 2">
    <location>
        <begin position="175"/>
        <end position="351"/>
    </location>
</feature>
<feature type="domain" description="KH-like" evidence="1">
    <location>
        <begin position="352"/>
        <end position="436"/>
    </location>
</feature>
<feature type="binding site" evidence="1">
    <location>
        <begin position="10"/>
        <end position="17"/>
    </location>
    <ligand>
        <name>GTP</name>
        <dbReference type="ChEBI" id="CHEBI:37565"/>
        <label>1</label>
    </ligand>
</feature>
<feature type="binding site" evidence="1">
    <location>
        <begin position="57"/>
        <end position="61"/>
    </location>
    <ligand>
        <name>GTP</name>
        <dbReference type="ChEBI" id="CHEBI:37565"/>
        <label>1</label>
    </ligand>
</feature>
<feature type="binding site" evidence="1">
    <location>
        <begin position="119"/>
        <end position="122"/>
    </location>
    <ligand>
        <name>GTP</name>
        <dbReference type="ChEBI" id="CHEBI:37565"/>
        <label>1</label>
    </ligand>
</feature>
<feature type="binding site" evidence="1">
    <location>
        <begin position="181"/>
        <end position="188"/>
    </location>
    <ligand>
        <name>GTP</name>
        <dbReference type="ChEBI" id="CHEBI:37565"/>
        <label>2</label>
    </ligand>
</feature>
<feature type="binding site" evidence="1">
    <location>
        <begin position="229"/>
        <end position="233"/>
    </location>
    <ligand>
        <name>GTP</name>
        <dbReference type="ChEBI" id="CHEBI:37565"/>
        <label>2</label>
    </ligand>
</feature>
<feature type="binding site" evidence="1">
    <location>
        <begin position="294"/>
        <end position="297"/>
    </location>
    <ligand>
        <name>GTP</name>
        <dbReference type="ChEBI" id="CHEBI:37565"/>
        <label>2</label>
    </ligand>
</feature>
<organism>
    <name type="scientific">Lactococcus lactis subsp. cremoris (strain SK11)</name>
    <dbReference type="NCBI Taxonomy" id="272622"/>
    <lineage>
        <taxon>Bacteria</taxon>
        <taxon>Bacillati</taxon>
        <taxon>Bacillota</taxon>
        <taxon>Bacilli</taxon>
        <taxon>Lactobacillales</taxon>
        <taxon>Streptococcaceae</taxon>
        <taxon>Lactococcus</taxon>
        <taxon>Lactococcus cremoris subsp. cremoris</taxon>
    </lineage>
</organism>
<dbReference type="EMBL" id="CP000425">
    <property type="protein sequence ID" value="ABJ72356.1"/>
    <property type="molecule type" value="Genomic_DNA"/>
</dbReference>
<dbReference type="RefSeq" id="WP_011675724.1">
    <property type="nucleotide sequence ID" value="NC_008527.1"/>
</dbReference>
<dbReference type="SMR" id="Q030L6"/>
<dbReference type="KEGG" id="llc:LACR_0799"/>
<dbReference type="HOGENOM" id="CLU_016077_6_2_9"/>
<dbReference type="Proteomes" id="UP000000240">
    <property type="component" value="Chromosome"/>
</dbReference>
<dbReference type="GO" id="GO:0005525">
    <property type="term" value="F:GTP binding"/>
    <property type="evidence" value="ECO:0007669"/>
    <property type="project" value="UniProtKB-UniRule"/>
</dbReference>
<dbReference type="GO" id="GO:0043022">
    <property type="term" value="F:ribosome binding"/>
    <property type="evidence" value="ECO:0007669"/>
    <property type="project" value="TreeGrafter"/>
</dbReference>
<dbReference type="GO" id="GO:0042254">
    <property type="term" value="P:ribosome biogenesis"/>
    <property type="evidence" value="ECO:0007669"/>
    <property type="project" value="UniProtKB-KW"/>
</dbReference>
<dbReference type="CDD" id="cd01894">
    <property type="entry name" value="EngA1"/>
    <property type="match status" value="1"/>
</dbReference>
<dbReference type="CDD" id="cd01895">
    <property type="entry name" value="EngA2"/>
    <property type="match status" value="1"/>
</dbReference>
<dbReference type="FunFam" id="3.30.300.20:FF:000004">
    <property type="entry name" value="GTPase Der"/>
    <property type="match status" value="1"/>
</dbReference>
<dbReference type="FunFam" id="3.40.50.300:FF:000040">
    <property type="entry name" value="GTPase Der"/>
    <property type="match status" value="1"/>
</dbReference>
<dbReference type="FunFam" id="3.40.50.300:FF:000057">
    <property type="entry name" value="GTPase Der"/>
    <property type="match status" value="1"/>
</dbReference>
<dbReference type="Gene3D" id="3.30.300.20">
    <property type="match status" value="1"/>
</dbReference>
<dbReference type="Gene3D" id="3.40.50.300">
    <property type="entry name" value="P-loop containing nucleotide triphosphate hydrolases"/>
    <property type="match status" value="2"/>
</dbReference>
<dbReference type="HAMAP" id="MF_00195">
    <property type="entry name" value="GTPase_Der"/>
    <property type="match status" value="1"/>
</dbReference>
<dbReference type="InterPro" id="IPR031166">
    <property type="entry name" value="G_ENGA"/>
</dbReference>
<dbReference type="InterPro" id="IPR006073">
    <property type="entry name" value="GTP-bd"/>
</dbReference>
<dbReference type="InterPro" id="IPR016484">
    <property type="entry name" value="GTPase_Der"/>
</dbReference>
<dbReference type="InterPro" id="IPR032859">
    <property type="entry name" value="KH_dom-like"/>
</dbReference>
<dbReference type="InterPro" id="IPR015946">
    <property type="entry name" value="KH_dom-like_a/b"/>
</dbReference>
<dbReference type="InterPro" id="IPR027417">
    <property type="entry name" value="P-loop_NTPase"/>
</dbReference>
<dbReference type="InterPro" id="IPR005225">
    <property type="entry name" value="Small_GTP-bd"/>
</dbReference>
<dbReference type="NCBIfam" id="TIGR03594">
    <property type="entry name" value="GTPase_EngA"/>
    <property type="match status" value="1"/>
</dbReference>
<dbReference type="NCBIfam" id="TIGR00231">
    <property type="entry name" value="small_GTP"/>
    <property type="match status" value="2"/>
</dbReference>
<dbReference type="PANTHER" id="PTHR43834">
    <property type="entry name" value="GTPASE DER"/>
    <property type="match status" value="1"/>
</dbReference>
<dbReference type="PANTHER" id="PTHR43834:SF6">
    <property type="entry name" value="GTPASE DER"/>
    <property type="match status" value="1"/>
</dbReference>
<dbReference type="Pfam" id="PF14714">
    <property type="entry name" value="KH_dom-like"/>
    <property type="match status" value="1"/>
</dbReference>
<dbReference type="Pfam" id="PF01926">
    <property type="entry name" value="MMR_HSR1"/>
    <property type="match status" value="2"/>
</dbReference>
<dbReference type="PIRSF" id="PIRSF006485">
    <property type="entry name" value="GTP-binding_EngA"/>
    <property type="match status" value="1"/>
</dbReference>
<dbReference type="PRINTS" id="PR00326">
    <property type="entry name" value="GTP1OBG"/>
</dbReference>
<dbReference type="SUPFAM" id="SSF52540">
    <property type="entry name" value="P-loop containing nucleoside triphosphate hydrolases"/>
    <property type="match status" value="2"/>
</dbReference>
<dbReference type="PROSITE" id="PS51712">
    <property type="entry name" value="G_ENGA"/>
    <property type="match status" value="2"/>
</dbReference>
<protein>
    <recommendedName>
        <fullName evidence="1">GTPase Der</fullName>
    </recommendedName>
    <alternativeName>
        <fullName evidence="1">GTP-binding protein EngA</fullName>
    </alternativeName>
</protein>
<gene>
    <name evidence="1" type="primary">der</name>
    <name type="synonym">engA</name>
    <name type="ordered locus">LACR_0799</name>
</gene>
<proteinExistence type="inferred from homology"/>
<name>DER_LACLS</name>